<name>EIF3L_DROGR</name>
<comment type="function">
    <text evidence="1">Component of the eukaryotic translation initiation factor 3 (eIF-3) complex, which is involved in protein synthesis of a specialized repertoire of mRNAs and, together with other initiation factors, stimulates binding of mRNA and methionyl-tRNAi to the 40S ribosome. The eIF-3 complex specifically targets and initiates translation of a subset of mRNAs involved in cell proliferation.</text>
</comment>
<comment type="subunit">
    <text evidence="1">Component of the eukaryotic translation initiation factor 3 (eIF-3) complex. The eIF-3 complex interacts with pix.</text>
</comment>
<comment type="subcellular location">
    <subcellularLocation>
        <location evidence="1">Cytoplasm</location>
    </subcellularLocation>
</comment>
<comment type="similarity">
    <text evidence="1">Belongs to the eIF-3 subunit L family.</text>
</comment>
<sequence>MYGGEDFNNTQQDFYDDYAHTGDPALDLEYERNYYANRMPENVKYFLINFCQAIKEGNLYDIQNMYENTFPQISDHHFDKSAWPEEQEVGAIVDNDKVFLILYKELYYRHIHARIPGGPKLDQRINSFFNYCDFFNLIISAQNPVLLELPDIWLWELVDEFVYQFQNFAQYRARLTDKSQDEIQQLCVNHSNVWSILCILNVLHSLVDISNIKKQLEAISQGIDPQTVAGDFGKLAFYKMLGYFSLVGLLRVHSLLGDYYQAIKVLEPIEIHKKSAYSHIPACQISTSYYVGFAYMMMRRYADAIRTFSDILLYIQRTKQLYSTRSYQNDQINKQAEQMYHLLAICLVLHPQCIDESIQQVLREKNYHDAMFKMQCGDLEVFKSFFVFACPRFVSPCPPVADAPLEDYVKDPMEHQLLVFMDEVRQQKDLPTTRSYLKLYTTLPLTKLASFIDPNANEDDVSKLLIRLLCFKHKMRNLVWSKGPSGLEGTFKSGSELDFYIDDDMIHIADTKVSHRYGDFFVRKIMKFNDLNRKLKNINI</sequence>
<proteinExistence type="inferred from homology"/>
<reference key="1">
    <citation type="journal article" date="2007" name="Nature">
        <title>Evolution of genes and genomes on the Drosophila phylogeny.</title>
        <authorList>
            <consortium name="Drosophila 12 genomes consortium"/>
        </authorList>
    </citation>
    <scope>NUCLEOTIDE SEQUENCE [LARGE SCALE GENOMIC DNA]</scope>
    <source>
        <strain>Tucson 15287-2541.00</strain>
    </source>
</reference>
<accession>B4IWN1</accession>
<evidence type="ECO:0000255" key="1">
    <source>
        <dbReference type="HAMAP-Rule" id="MF_03011"/>
    </source>
</evidence>
<evidence type="ECO:0000255" key="2">
    <source>
        <dbReference type="PROSITE-ProRule" id="PRU01185"/>
    </source>
</evidence>
<keyword id="KW-0963">Cytoplasm</keyword>
<keyword id="KW-0396">Initiation factor</keyword>
<keyword id="KW-0648">Protein biosynthesis</keyword>
<keyword id="KW-1185">Reference proteome</keyword>
<gene>
    <name type="ORF">GH15308</name>
</gene>
<feature type="chain" id="PRO_0000364244" description="Eukaryotic translation initiation factor 3 subunit L">
    <location>
        <begin position="1"/>
        <end position="540"/>
    </location>
</feature>
<feature type="domain" description="PCI" evidence="2">
    <location>
        <begin position="307"/>
        <end position="515"/>
    </location>
</feature>
<dbReference type="EMBL" id="CH916366">
    <property type="protein sequence ID" value="EDV96257.1"/>
    <property type="molecule type" value="Genomic_DNA"/>
</dbReference>
<dbReference type="SMR" id="B4IWN1"/>
<dbReference type="FunCoup" id="B4IWN1">
    <property type="interactions" value="1963"/>
</dbReference>
<dbReference type="STRING" id="7222.B4IWN1"/>
<dbReference type="EnsemblMetazoa" id="FBtr0150722">
    <property type="protein sequence ID" value="FBpp0149214"/>
    <property type="gene ID" value="FBgn0122783"/>
</dbReference>
<dbReference type="EnsemblMetazoa" id="XM_001983873.3">
    <property type="protein sequence ID" value="XP_001983909.1"/>
    <property type="gene ID" value="LOC6556651"/>
</dbReference>
<dbReference type="GeneID" id="6556651"/>
<dbReference type="KEGG" id="dgr:6556651"/>
<dbReference type="CTD" id="51386"/>
<dbReference type="eggNOG" id="KOG3677">
    <property type="taxonomic scope" value="Eukaryota"/>
</dbReference>
<dbReference type="HOGENOM" id="CLU_029210_0_1_1"/>
<dbReference type="InParanoid" id="B4IWN1"/>
<dbReference type="OMA" id="AGWFIRN"/>
<dbReference type="OrthoDB" id="15082at2759"/>
<dbReference type="PhylomeDB" id="B4IWN1"/>
<dbReference type="Proteomes" id="UP000001070">
    <property type="component" value="Unassembled WGS sequence"/>
</dbReference>
<dbReference type="GO" id="GO:0016282">
    <property type="term" value="C:eukaryotic 43S preinitiation complex"/>
    <property type="evidence" value="ECO:0007669"/>
    <property type="project" value="UniProtKB-UniRule"/>
</dbReference>
<dbReference type="GO" id="GO:0033290">
    <property type="term" value="C:eukaryotic 48S preinitiation complex"/>
    <property type="evidence" value="ECO:0007669"/>
    <property type="project" value="UniProtKB-UniRule"/>
</dbReference>
<dbReference type="GO" id="GO:0005852">
    <property type="term" value="C:eukaryotic translation initiation factor 3 complex"/>
    <property type="evidence" value="ECO:0007669"/>
    <property type="project" value="UniProtKB-UniRule"/>
</dbReference>
<dbReference type="GO" id="GO:0003743">
    <property type="term" value="F:translation initiation factor activity"/>
    <property type="evidence" value="ECO:0007669"/>
    <property type="project" value="UniProtKB-UniRule"/>
</dbReference>
<dbReference type="GO" id="GO:0001732">
    <property type="term" value="P:formation of cytoplasmic translation initiation complex"/>
    <property type="evidence" value="ECO:0007669"/>
    <property type="project" value="UniProtKB-UniRule"/>
</dbReference>
<dbReference type="HAMAP" id="MF_03011">
    <property type="entry name" value="eIF3l"/>
    <property type="match status" value="1"/>
</dbReference>
<dbReference type="InterPro" id="IPR019382">
    <property type="entry name" value="eIF3l"/>
</dbReference>
<dbReference type="InterPro" id="IPR000717">
    <property type="entry name" value="PCI_dom"/>
</dbReference>
<dbReference type="InterPro" id="IPR011990">
    <property type="entry name" value="TPR-like_helical_dom_sf"/>
</dbReference>
<dbReference type="PANTHER" id="PTHR13242">
    <property type="entry name" value="EUKARYOTIC TRANSLATION INITIATION FACTOR 3"/>
    <property type="match status" value="1"/>
</dbReference>
<dbReference type="PANTHER" id="PTHR13242:SF0">
    <property type="entry name" value="EUKARYOTIC TRANSLATION INITIATION FACTOR 3 SUBUNIT L"/>
    <property type="match status" value="1"/>
</dbReference>
<dbReference type="Pfam" id="PF10255">
    <property type="entry name" value="Paf67"/>
    <property type="match status" value="1"/>
</dbReference>
<dbReference type="SUPFAM" id="SSF48452">
    <property type="entry name" value="TPR-like"/>
    <property type="match status" value="1"/>
</dbReference>
<dbReference type="PROSITE" id="PS50250">
    <property type="entry name" value="PCI"/>
    <property type="match status" value="1"/>
</dbReference>
<protein>
    <recommendedName>
        <fullName evidence="1">Eukaryotic translation initiation factor 3 subunit L</fullName>
        <shortName evidence="1">eIF3l</shortName>
    </recommendedName>
</protein>
<organism>
    <name type="scientific">Drosophila grimshawi</name>
    <name type="common">Hawaiian fruit fly</name>
    <name type="synonym">Idiomyia grimshawi</name>
    <dbReference type="NCBI Taxonomy" id="7222"/>
    <lineage>
        <taxon>Eukaryota</taxon>
        <taxon>Metazoa</taxon>
        <taxon>Ecdysozoa</taxon>
        <taxon>Arthropoda</taxon>
        <taxon>Hexapoda</taxon>
        <taxon>Insecta</taxon>
        <taxon>Pterygota</taxon>
        <taxon>Neoptera</taxon>
        <taxon>Endopterygota</taxon>
        <taxon>Diptera</taxon>
        <taxon>Brachycera</taxon>
        <taxon>Muscomorpha</taxon>
        <taxon>Ephydroidea</taxon>
        <taxon>Drosophilidae</taxon>
        <taxon>Drosophila</taxon>
        <taxon>Hawaiian Drosophila</taxon>
    </lineage>
</organism>